<organism>
    <name type="scientific">Mus musculus</name>
    <name type="common">Mouse</name>
    <dbReference type="NCBI Taxonomy" id="10090"/>
    <lineage>
        <taxon>Eukaryota</taxon>
        <taxon>Metazoa</taxon>
        <taxon>Chordata</taxon>
        <taxon>Craniata</taxon>
        <taxon>Vertebrata</taxon>
        <taxon>Euteleostomi</taxon>
        <taxon>Mammalia</taxon>
        <taxon>Eutheria</taxon>
        <taxon>Euarchontoglires</taxon>
        <taxon>Glires</taxon>
        <taxon>Rodentia</taxon>
        <taxon>Myomorpha</taxon>
        <taxon>Muroidea</taxon>
        <taxon>Muridae</taxon>
        <taxon>Murinae</taxon>
        <taxon>Mus</taxon>
        <taxon>Mus</taxon>
    </lineage>
</organism>
<keyword id="KW-0106">Calcium</keyword>
<keyword id="KW-0333">Golgi apparatus</keyword>
<keyword id="KW-0378">Hydrolase</keyword>
<keyword id="KW-0449">Lipoprotein</keyword>
<keyword id="KW-0472">Membrane</keyword>
<keyword id="KW-0479">Metal-binding</keyword>
<keyword id="KW-0488">Methylation</keyword>
<keyword id="KW-0597">Phosphoprotein</keyword>
<keyword id="KW-0636">Prenylation</keyword>
<keyword id="KW-0645">Protease</keyword>
<keyword id="KW-1185">Reference proteome</keyword>
<keyword id="KW-0677">Repeat</keyword>
<keyword id="KW-0788">Thiol protease</keyword>
<keyword id="KW-0833">Ubl conjugation pathway</keyword>
<protein>
    <recommendedName>
        <fullName>Ubiquitin carboxyl-terminal hydrolase 32</fullName>
        <ecNumber evidence="1">3.4.19.12</ecNumber>
    </recommendedName>
    <alternativeName>
        <fullName>Deubiquitinating enzyme 32</fullName>
    </alternativeName>
    <alternativeName>
        <fullName>Ubiquitin thioesterase 32</fullName>
    </alternativeName>
    <alternativeName>
        <fullName>Ubiquitin-specific-processing protease 32</fullName>
    </alternativeName>
</protein>
<comment type="function">
    <text evidence="1">Deubiquitinase that can remove conjugated ubiquitin from target proteins, such as RAB7A and LAMTOR1 (By similarity). Acts as a positive regulator of the mTORC1 signaling by mediating deubiquitination of LAMTOR1, thereby promoting the association between LAMTOR1 and the lysosomal V-ATPase complex and subsequent activation of the mTORC1 complex (By similarity).</text>
</comment>
<comment type="catalytic activity">
    <reaction evidence="1">
        <text>Thiol-dependent hydrolysis of ester, thioester, amide, peptide and isopeptide bonds formed by the C-terminal Gly of ubiquitin (a 76-residue protein attached to proteins as an intracellular targeting signal).</text>
        <dbReference type="EC" id="3.4.19.12"/>
    </reaction>
</comment>
<comment type="subcellular location">
    <subcellularLocation>
        <location evidence="1">Golgi apparatus membrane</location>
        <topology evidence="1">Lipid-anchor</topology>
    </subcellularLocation>
</comment>
<comment type="similarity">
    <text evidence="7">Belongs to the peptidase C19 family.</text>
</comment>
<name>UBP32_MOUSE</name>
<feature type="chain" id="PRO_0000458839" description="Ubiquitin carboxyl-terminal hydrolase 32">
    <location>
        <begin position="1"/>
        <end position="1601"/>
    </location>
</feature>
<feature type="propeptide" id="PRO_0000458840" description="Removed in mature form" evidence="2">
    <location>
        <begin position="1602"/>
        <end position="1604"/>
    </location>
</feature>
<feature type="domain" description="EF-hand 1" evidence="3">
    <location>
        <begin position="91"/>
        <end position="126"/>
    </location>
</feature>
<feature type="domain" description="EF-hand 2" evidence="3">
    <location>
        <begin position="228"/>
        <end position="263"/>
    </location>
</feature>
<feature type="domain" description="EF-hand 3" evidence="3">
    <location>
        <begin position="264"/>
        <end position="299"/>
    </location>
</feature>
<feature type="domain" description="DUSP" evidence="4">
    <location>
        <begin position="369"/>
        <end position="585"/>
    </location>
</feature>
<feature type="domain" description="USP" evidence="5">
    <location>
        <begin position="734"/>
        <end position="1567"/>
    </location>
</feature>
<feature type="region of interest" description="Disordered" evidence="6">
    <location>
        <begin position="1353"/>
        <end position="1432"/>
    </location>
</feature>
<feature type="region of interest" description="Disordered" evidence="6">
    <location>
        <begin position="1484"/>
        <end position="1504"/>
    </location>
</feature>
<feature type="compositionally biased region" description="Polar residues" evidence="6">
    <location>
        <begin position="1360"/>
        <end position="1370"/>
    </location>
</feature>
<feature type="compositionally biased region" description="Low complexity" evidence="6">
    <location>
        <begin position="1371"/>
        <end position="1399"/>
    </location>
</feature>
<feature type="compositionally biased region" description="Polar residues" evidence="6">
    <location>
        <begin position="1415"/>
        <end position="1424"/>
    </location>
</feature>
<feature type="compositionally biased region" description="Basic and acidic residues" evidence="6">
    <location>
        <begin position="1491"/>
        <end position="1504"/>
    </location>
</feature>
<feature type="active site" description="Nucleophile" evidence="5">
    <location>
        <position position="743"/>
    </location>
</feature>
<feature type="active site" description="Proton acceptor" evidence="5">
    <location>
        <position position="1526"/>
    </location>
</feature>
<feature type="binding site" evidence="3">
    <location>
        <position position="241"/>
    </location>
    <ligand>
        <name>Ca(2+)</name>
        <dbReference type="ChEBI" id="CHEBI:29108"/>
        <label>1</label>
    </ligand>
</feature>
<feature type="binding site" evidence="3">
    <location>
        <position position="243"/>
    </location>
    <ligand>
        <name>Ca(2+)</name>
        <dbReference type="ChEBI" id="CHEBI:29108"/>
        <label>1</label>
    </ligand>
</feature>
<feature type="binding site" evidence="3">
    <location>
        <position position="245"/>
    </location>
    <ligand>
        <name>Ca(2+)</name>
        <dbReference type="ChEBI" id="CHEBI:29108"/>
        <label>1</label>
    </ligand>
</feature>
<feature type="binding site" evidence="3">
    <location>
        <position position="247"/>
    </location>
    <ligand>
        <name>Ca(2+)</name>
        <dbReference type="ChEBI" id="CHEBI:29108"/>
        <label>1</label>
    </ligand>
</feature>
<feature type="binding site" evidence="3">
    <location>
        <position position="252"/>
    </location>
    <ligand>
        <name>Ca(2+)</name>
        <dbReference type="ChEBI" id="CHEBI:29108"/>
        <label>1</label>
    </ligand>
</feature>
<feature type="binding site" evidence="3">
    <location>
        <position position="277"/>
    </location>
    <ligand>
        <name>Ca(2+)</name>
        <dbReference type="ChEBI" id="CHEBI:29108"/>
        <label>2</label>
    </ligand>
</feature>
<feature type="binding site" evidence="3">
    <location>
        <position position="279"/>
    </location>
    <ligand>
        <name>Ca(2+)</name>
        <dbReference type="ChEBI" id="CHEBI:29108"/>
        <label>2</label>
    </ligand>
</feature>
<feature type="binding site" evidence="3">
    <location>
        <position position="281"/>
    </location>
    <ligand>
        <name>Ca(2+)</name>
        <dbReference type="ChEBI" id="CHEBI:29108"/>
        <label>2</label>
    </ligand>
</feature>
<feature type="binding site" evidence="3">
    <location>
        <position position="288"/>
    </location>
    <ligand>
        <name>Ca(2+)</name>
        <dbReference type="ChEBI" id="CHEBI:29108"/>
        <label>2</label>
    </ligand>
</feature>
<feature type="modified residue" description="Phosphotyrosine" evidence="1">
    <location>
        <position position="1173"/>
    </location>
</feature>
<feature type="modified residue" description="Phosphoserine" evidence="1">
    <location>
        <position position="1350"/>
    </location>
</feature>
<feature type="modified residue" description="Phosphoserine" evidence="1">
    <location>
        <position position="1372"/>
    </location>
</feature>
<feature type="modified residue" description="Phosphoserine" evidence="1">
    <location>
        <position position="1376"/>
    </location>
</feature>
<feature type="modified residue" description="Phosphoserine" evidence="1">
    <location>
        <position position="1454"/>
    </location>
</feature>
<feature type="modified residue" description="Phosphoserine" evidence="1">
    <location>
        <position position="1588"/>
    </location>
</feature>
<feature type="modified residue" description="Cysteine methyl ester" evidence="2">
    <location>
        <position position="1601"/>
    </location>
</feature>
<feature type="lipid moiety-binding region" description="S-farnesyl cysteine" evidence="2">
    <location>
        <position position="1601"/>
    </location>
</feature>
<sequence>MGAKESRIGFLSYEEALRRVTDVELKRLKDAFKRTCGLSYYMSQHCFIREVLGDGVPPKVAEVIYCSFGGTSKGLHFNNLIVGLVLLTRGKDEEKAKYIFSLFSSESGSYVVREEMERMLHVVDGKVPDTLRKCFSEGEKVNYEKFRNWLLLNKDAFTFSRWLLSGGVYVTLTDDSDTPTFYQTLAGVTHLEESDIIDLEKRYWLLKAQSRTGRFDLETFGPLVSPPIRPSLSEGLFNAFDENRDNHIDFKEISCGLSACCRGPLAERQKFCFKVFDVDRDGVLSRVELKDMVVALLEVWKDNRTDDIPELHMDLSDIVERILNAHDTTKVGHLTLEDYQIWSVKNVLANEFLNLLFQVCHIVLGLRPATPEEEGQIIRGWLERESRYGLQPGHNWFIISMQWWQQWKEYVKYDASPVVIEPSSVLNGGKFSFGTAAHPIEHGEDRISNNLGYMNTTEEKYSDNISSASEASESTGSGFLYSGTPGADMCFARQHNTSDNNNQCLLGANGNILLHLNPQKPGAIDNQPLVTQEPVKATSLTLEGGRLKRTPQLIHGRDYEMVPEPVWRALYHWYGSNLALPRPVIKNSKTDIPELELFPRYLLFLRQQPATRTQQSNIWVNMGNVPSPNAPLKRVLAYTGCFSRMQTIKEIHEYLSQRLRIKEEDMRLWLYNSENYLTLLDDEDHRLEYLKIQDEQHLVIEVRNKDMSWPEEMSFIANSSKIDRHKVPTEKGATGLSNLGNTCFMNSSIQCVSNTQPLTQYFISGRHLYELNRTNPIGMKGHMAKCYGDLVQELWSGTQKNVAPLKLRWTIAKYAPRFNGFQQQDSQELLAFLLDGLHEDLNRVHEKPYVELKDSDGRPDWEVAAEAWDNHLRRNRSIVVDLFHGQLRSQVKCKTCGHISVRFDPFNFLSLPLPMDSYMHLEITVIKLDGTTPIRYGLRLNMDEKYTGLKKQLSDLCGLKSEQILFAEVHSSNIKNFPQDNQKVRLSVSGFLCAFEIPIPASPVSACSPIQTDCSSSPSTNGLFTLTTNGDLPRPIFIPNGMPNTVVPCGTEKNVTNGIVNGHMPPLPDDPFTGYIIAVHRKMMRTELYFLSSQKNRPSLFGMPLIVPCTVHTRKKDLYDAVWIQVSRLASPLPPQEASNHAQDCDDSMGYQYPFTLRVVQKDGNSCAWCPWYRFCRGCKIDCGEDRAFIGNACIAVDWDPTALHLRYQTSQERVVEEHESVEQSRRAQAEPINLDSCLRAFTSEEELGENEMYYCSKCKTHCLATKKLDLWRLPPILIIHLKRFQFVNGRWIKSQKIVKFPRESFDPSAFLVPRDPTLCQHKPLTPQGDDFSELRIPAGDVKKVDIQSSAGEEDVLLSKSPSSLSANVTSSPKGSPSSSRKSGASCPSSKNSSPNSSPRTLGRNKGRLRLPQIGSKNKLSNSKENLDTSKENGAGQICELADTLNRRHVLGGSQPELVTPLDHEITLANGFLYEHEACGNGYSNGQLGNHSEEDSTDDQREETHSKPIYNLYAISCHSGILGGGHYVTYAKNPNCKWYCYNDSSCKELHPDEIDTDSAYILFYEQQGIDCAQFLPKTDGKKMADTSSMDEDFESDYKKYCVLQ</sequence>
<evidence type="ECO:0000250" key="1">
    <source>
        <dbReference type="UniProtKB" id="Q8NFA0"/>
    </source>
</evidence>
<evidence type="ECO:0000255" key="2"/>
<evidence type="ECO:0000255" key="3">
    <source>
        <dbReference type="PROSITE-ProRule" id="PRU00448"/>
    </source>
</evidence>
<evidence type="ECO:0000255" key="4">
    <source>
        <dbReference type="PROSITE-ProRule" id="PRU00613"/>
    </source>
</evidence>
<evidence type="ECO:0000255" key="5">
    <source>
        <dbReference type="PROSITE-ProRule" id="PRU01035"/>
    </source>
</evidence>
<evidence type="ECO:0000256" key="6">
    <source>
        <dbReference type="SAM" id="MobiDB-lite"/>
    </source>
</evidence>
<evidence type="ECO:0000305" key="7"/>
<evidence type="ECO:0000312" key="8">
    <source>
        <dbReference type="MGI" id="MGI:2144475"/>
    </source>
</evidence>
<gene>
    <name evidence="8" type="primary">Usp32</name>
</gene>
<dbReference type="EC" id="3.4.19.12" evidence="1"/>
<dbReference type="EMBL" id="BC051399">
    <property type="protein sequence ID" value="AAH51399.1"/>
    <property type="molecule type" value="mRNA"/>
</dbReference>
<dbReference type="EMBL" id="BC058994">
    <property type="protein sequence ID" value="AAH58994.1"/>
    <property type="molecule type" value="mRNA"/>
</dbReference>
<dbReference type="EMBL" id="AK032362">
    <property type="protein sequence ID" value="BAC27836.1"/>
    <property type="molecule type" value="mRNA"/>
</dbReference>
<dbReference type="EMBL" id="AK140739">
    <property type="protein sequence ID" value="BAE24461.1"/>
    <property type="molecule type" value="mRNA"/>
</dbReference>
<dbReference type="CCDS" id="CCDS36264.1"/>
<dbReference type="RefSeq" id="NP_001025105.1">
    <property type="nucleotide sequence ID" value="NM_001029934.1"/>
</dbReference>
<dbReference type="SMR" id="F8VPZ3"/>
<dbReference type="FunCoup" id="F8VPZ3">
    <property type="interactions" value="3559"/>
</dbReference>
<dbReference type="STRING" id="10090.ENSMUSP00000103710"/>
<dbReference type="MEROPS" id="C19.009"/>
<dbReference type="GlyGen" id="F8VPZ3">
    <property type="glycosylation" value="3 sites, 3 N-linked glycans (3 sites)"/>
</dbReference>
<dbReference type="iPTMnet" id="F8VPZ3"/>
<dbReference type="PhosphoSitePlus" id="F8VPZ3"/>
<dbReference type="SwissPalm" id="F8VPZ3"/>
<dbReference type="PaxDb" id="10090-ENSMUSP00000103710"/>
<dbReference type="PeptideAtlas" id="F8VPZ3"/>
<dbReference type="ProteomicsDB" id="353378"/>
<dbReference type="DNASU" id="237898"/>
<dbReference type="Ensembl" id="ENSMUST00000108075.9">
    <property type="protein sequence ID" value="ENSMUSP00000103710.3"/>
    <property type="gene ID" value="ENSMUSG00000000804.15"/>
</dbReference>
<dbReference type="GeneID" id="237898"/>
<dbReference type="KEGG" id="mmu:237898"/>
<dbReference type="UCSC" id="uc007krh.1">
    <property type="organism name" value="mouse"/>
</dbReference>
<dbReference type="AGR" id="MGI:2144475"/>
<dbReference type="CTD" id="84669"/>
<dbReference type="MGI" id="MGI:2144475">
    <property type="gene designation" value="Usp32"/>
</dbReference>
<dbReference type="VEuPathDB" id="HostDB:ENSMUSG00000000804"/>
<dbReference type="eggNOG" id="KOG0044">
    <property type="taxonomic scope" value="Eukaryota"/>
</dbReference>
<dbReference type="eggNOG" id="KOG1870">
    <property type="taxonomic scope" value="Eukaryota"/>
</dbReference>
<dbReference type="GeneTree" id="ENSGT00940000155797"/>
<dbReference type="HOGENOM" id="CLU_001060_10_1_1"/>
<dbReference type="InParanoid" id="F8VPZ3"/>
<dbReference type="OMA" id="FKADNRR"/>
<dbReference type="OrthoDB" id="265776at2759"/>
<dbReference type="PhylomeDB" id="F8VPZ3"/>
<dbReference type="TreeFam" id="TF324190"/>
<dbReference type="BioGRID-ORCS" id="237898">
    <property type="hits" value="3 hits in 78 CRISPR screens"/>
</dbReference>
<dbReference type="ChiTaRS" id="Usp32">
    <property type="organism name" value="mouse"/>
</dbReference>
<dbReference type="PRO" id="PR:F8VPZ3"/>
<dbReference type="Proteomes" id="UP000000589">
    <property type="component" value="Chromosome 11"/>
</dbReference>
<dbReference type="RNAct" id="F8VPZ3">
    <property type="molecule type" value="protein"/>
</dbReference>
<dbReference type="Bgee" id="ENSMUSG00000000804">
    <property type="expression patterns" value="Expressed in pigmented layer of retina and 233 other cell types or tissues"/>
</dbReference>
<dbReference type="ExpressionAtlas" id="F8VPZ3">
    <property type="expression patterns" value="baseline and differential"/>
</dbReference>
<dbReference type="GO" id="GO:0005794">
    <property type="term" value="C:Golgi apparatus"/>
    <property type="evidence" value="ECO:0000250"/>
    <property type="project" value="UniProtKB"/>
</dbReference>
<dbReference type="GO" id="GO:0000139">
    <property type="term" value="C:Golgi membrane"/>
    <property type="evidence" value="ECO:0007669"/>
    <property type="project" value="UniProtKB-SubCell"/>
</dbReference>
<dbReference type="GO" id="GO:0005509">
    <property type="term" value="F:calcium ion binding"/>
    <property type="evidence" value="ECO:0007669"/>
    <property type="project" value="InterPro"/>
</dbReference>
<dbReference type="GO" id="GO:0004843">
    <property type="term" value="F:cysteine-type deubiquitinase activity"/>
    <property type="evidence" value="ECO:0000250"/>
    <property type="project" value="UniProtKB"/>
</dbReference>
<dbReference type="GO" id="GO:1904263">
    <property type="term" value="P:positive regulation of TORC1 signaling"/>
    <property type="evidence" value="ECO:0000250"/>
    <property type="project" value="UniProtKB"/>
</dbReference>
<dbReference type="GO" id="GO:0016579">
    <property type="term" value="P:protein deubiquitination"/>
    <property type="evidence" value="ECO:0007669"/>
    <property type="project" value="InterPro"/>
</dbReference>
<dbReference type="GO" id="GO:0006508">
    <property type="term" value="P:proteolysis"/>
    <property type="evidence" value="ECO:0007669"/>
    <property type="project" value="UniProtKB-KW"/>
</dbReference>
<dbReference type="CDD" id="cd00051">
    <property type="entry name" value="EFh"/>
    <property type="match status" value="1"/>
</dbReference>
<dbReference type="FunFam" id="1.10.238.10:FF:000081">
    <property type="entry name" value="Ubiquitin carboxyl-terminal hydrolase 32"/>
    <property type="match status" value="1"/>
</dbReference>
<dbReference type="FunFam" id="1.10.238.10:FF:000128">
    <property type="entry name" value="Ubiquitin carboxyl-terminal hydrolase 32"/>
    <property type="match status" value="1"/>
</dbReference>
<dbReference type="FunFam" id="3.10.20.90:FF:000068">
    <property type="entry name" value="Ubiquitin carboxyl-terminal hydrolase 32"/>
    <property type="match status" value="1"/>
</dbReference>
<dbReference type="FunFam" id="3.30.2230.10:FF:000004">
    <property type="entry name" value="Ubiquitin carboxyl-terminal hydrolase 32"/>
    <property type="match status" value="1"/>
</dbReference>
<dbReference type="FunFam" id="3.90.70.10:FF:000018">
    <property type="entry name" value="Ubiquitin carboxyl-terminal hydrolase 32"/>
    <property type="match status" value="1"/>
</dbReference>
<dbReference type="FunFam" id="3.90.70.10:FF:000065">
    <property type="entry name" value="Ubiquitin carboxyl-terminal hydrolase 32"/>
    <property type="match status" value="1"/>
</dbReference>
<dbReference type="FunFam" id="3.90.70.10:FF:000076">
    <property type="entry name" value="Ubiquitin carboxyl-terminal hydrolase 32"/>
    <property type="match status" value="1"/>
</dbReference>
<dbReference type="Gene3D" id="3.90.70.10">
    <property type="entry name" value="Cysteine proteinases"/>
    <property type="match status" value="3"/>
</dbReference>
<dbReference type="Gene3D" id="3.30.2230.10">
    <property type="entry name" value="DUSP-like"/>
    <property type="match status" value="1"/>
</dbReference>
<dbReference type="Gene3D" id="1.10.238.10">
    <property type="entry name" value="EF-hand"/>
    <property type="match status" value="2"/>
</dbReference>
<dbReference type="Gene3D" id="3.10.20.90">
    <property type="entry name" value="Phosphatidylinositol 3-kinase Catalytic Subunit, Chain A, domain 1"/>
    <property type="match status" value="1"/>
</dbReference>
<dbReference type="InterPro" id="IPR035927">
    <property type="entry name" value="DUSP-like_sf"/>
</dbReference>
<dbReference type="InterPro" id="IPR011992">
    <property type="entry name" value="EF-hand-dom_pair"/>
</dbReference>
<dbReference type="InterPro" id="IPR018247">
    <property type="entry name" value="EF_Hand_1_Ca_BS"/>
</dbReference>
<dbReference type="InterPro" id="IPR002048">
    <property type="entry name" value="EF_hand_dom"/>
</dbReference>
<dbReference type="InterPro" id="IPR038765">
    <property type="entry name" value="Papain-like_cys_pep_sf"/>
</dbReference>
<dbReference type="InterPro" id="IPR006615">
    <property type="entry name" value="Pept_C19_DUSP"/>
</dbReference>
<dbReference type="InterPro" id="IPR001394">
    <property type="entry name" value="Peptidase_C19_UCH"/>
</dbReference>
<dbReference type="InterPro" id="IPR050185">
    <property type="entry name" value="Ub_carboxyl-term_hydrolase"/>
</dbReference>
<dbReference type="InterPro" id="IPR028135">
    <property type="entry name" value="Ub_USP-typ"/>
</dbReference>
<dbReference type="InterPro" id="IPR018200">
    <property type="entry name" value="USP_CS"/>
</dbReference>
<dbReference type="InterPro" id="IPR028889">
    <property type="entry name" value="USP_dom"/>
</dbReference>
<dbReference type="PANTHER" id="PTHR21646">
    <property type="entry name" value="UBIQUITIN CARBOXYL-TERMINAL HYDROLASE"/>
    <property type="match status" value="1"/>
</dbReference>
<dbReference type="PANTHER" id="PTHR21646:SF76">
    <property type="entry name" value="UBIQUITIN CARBOXYL-TERMINAL HYDROLASE 32"/>
    <property type="match status" value="1"/>
</dbReference>
<dbReference type="Pfam" id="PF06337">
    <property type="entry name" value="DUSP"/>
    <property type="match status" value="1"/>
</dbReference>
<dbReference type="Pfam" id="PF13202">
    <property type="entry name" value="EF-hand_5"/>
    <property type="match status" value="2"/>
</dbReference>
<dbReference type="Pfam" id="PF14836">
    <property type="entry name" value="Ubiquitin_3"/>
    <property type="match status" value="1"/>
</dbReference>
<dbReference type="Pfam" id="PF00443">
    <property type="entry name" value="UCH"/>
    <property type="match status" value="1"/>
</dbReference>
<dbReference type="Pfam" id="PF25265">
    <property type="entry name" value="USP32_N"/>
    <property type="match status" value="1"/>
</dbReference>
<dbReference type="PRINTS" id="PR00450">
    <property type="entry name" value="RECOVERIN"/>
</dbReference>
<dbReference type="SMART" id="SM00695">
    <property type="entry name" value="DUSP"/>
    <property type="match status" value="1"/>
</dbReference>
<dbReference type="SMART" id="SM00054">
    <property type="entry name" value="EFh"/>
    <property type="match status" value="2"/>
</dbReference>
<dbReference type="SUPFAM" id="SSF54001">
    <property type="entry name" value="Cysteine proteinases"/>
    <property type="match status" value="1"/>
</dbReference>
<dbReference type="SUPFAM" id="SSF143791">
    <property type="entry name" value="DUSP-like"/>
    <property type="match status" value="1"/>
</dbReference>
<dbReference type="SUPFAM" id="SSF47473">
    <property type="entry name" value="EF-hand"/>
    <property type="match status" value="2"/>
</dbReference>
<dbReference type="PROSITE" id="PS51283">
    <property type="entry name" value="DUSP"/>
    <property type="match status" value="1"/>
</dbReference>
<dbReference type="PROSITE" id="PS00018">
    <property type="entry name" value="EF_HAND_1"/>
    <property type="match status" value="2"/>
</dbReference>
<dbReference type="PROSITE" id="PS50222">
    <property type="entry name" value="EF_HAND_2"/>
    <property type="match status" value="2"/>
</dbReference>
<dbReference type="PROSITE" id="PS00972">
    <property type="entry name" value="USP_1"/>
    <property type="match status" value="1"/>
</dbReference>
<dbReference type="PROSITE" id="PS00973">
    <property type="entry name" value="USP_2"/>
    <property type="match status" value="1"/>
</dbReference>
<dbReference type="PROSITE" id="PS50235">
    <property type="entry name" value="USP_3"/>
    <property type="match status" value="1"/>
</dbReference>
<accession>F8VPZ3</accession>
<accession>Q3US74</accession>
<accession>Q6PD17</accession>
<accession>Q7TT84</accession>
<accession>Q8CCP4</accession>
<reference key="1">
    <citation type="journal article" date="2009" name="PLoS Biol.">
        <title>Lineage-specific biology revealed by a finished genome assembly of the mouse.</title>
        <authorList>
            <person name="Church D.M."/>
            <person name="Goodstadt L."/>
            <person name="Hillier L.W."/>
            <person name="Zody M.C."/>
            <person name="Goldstein S."/>
            <person name="She X."/>
            <person name="Bult C.J."/>
            <person name="Agarwala R."/>
            <person name="Cherry J.L."/>
            <person name="DiCuccio M."/>
            <person name="Hlavina W."/>
            <person name="Kapustin Y."/>
            <person name="Meric P."/>
            <person name="Maglott D."/>
            <person name="Birtle Z."/>
            <person name="Marques A.C."/>
            <person name="Graves T."/>
            <person name="Zhou S."/>
            <person name="Teague B."/>
            <person name="Potamousis K."/>
            <person name="Churas C."/>
            <person name="Place M."/>
            <person name="Herschleb J."/>
            <person name="Runnheim R."/>
            <person name="Forrest D."/>
            <person name="Amos-Landgraf J."/>
            <person name="Schwartz D.C."/>
            <person name="Cheng Z."/>
            <person name="Lindblad-Toh K."/>
            <person name="Eichler E.E."/>
            <person name="Ponting C.P."/>
        </authorList>
    </citation>
    <scope>NUCLEOTIDE SEQUENCE [LARGE SCALE GENOMIC DNA]</scope>
    <source>
        <strain>C57BL/6J</strain>
    </source>
</reference>
<reference key="2">
    <citation type="journal article" date="2004" name="Genome Res.">
        <title>The status, quality, and expansion of the NIH full-length cDNA project: the Mammalian Gene Collection (MGC).</title>
        <authorList>
            <consortium name="The MGC Project Team"/>
        </authorList>
    </citation>
    <scope>NUCLEOTIDE SEQUENCE [LARGE SCALE MRNA] OF 759-1604</scope>
    <source>
        <strain>C57BL/6J</strain>
        <tissue>Brain</tissue>
    </source>
</reference>
<reference key="3">
    <citation type="journal article" date="2005" name="Science">
        <title>The transcriptional landscape of the mammalian genome.</title>
        <authorList>
            <person name="Carninci P."/>
            <person name="Kasukawa T."/>
            <person name="Katayama S."/>
            <person name="Gough J."/>
            <person name="Frith M.C."/>
            <person name="Maeda N."/>
            <person name="Oyama R."/>
            <person name="Ravasi T."/>
            <person name="Lenhard B."/>
            <person name="Wells C."/>
            <person name="Kodzius R."/>
            <person name="Shimokawa K."/>
            <person name="Bajic V.B."/>
            <person name="Brenner S.E."/>
            <person name="Batalov S."/>
            <person name="Forrest A.R."/>
            <person name="Zavolan M."/>
            <person name="Davis M.J."/>
            <person name="Wilming L.G."/>
            <person name="Aidinis V."/>
            <person name="Allen J.E."/>
            <person name="Ambesi-Impiombato A."/>
            <person name="Apweiler R."/>
            <person name="Aturaliya R.N."/>
            <person name="Bailey T.L."/>
            <person name="Bansal M."/>
            <person name="Baxter L."/>
            <person name="Beisel K.W."/>
            <person name="Bersano T."/>
            <person name="Bono H."/>
            <person name="Chalk A.M."/>
            <person name="Chiu K.P."/>
            <person name="Choudhary V."/>
            <person name="Christoffels A."/>
            <person name="Clutterbuck D.R."/>
            <person name="Crowe M.L."/>
            <person name="Dalla E."/>
            <person name="Dalrymple B.P."/>
            <person name="de Bono B."/>
            <person name="Della Gatta G."/>
            <person name="di Bernardo D."/>
            <person name="Down T."/>
            <person name="Engstrom P."/>
            <person name="Fagiolini M."/>
            <person name="Faulkner G."/>
            <person name="Fletcher C.F."/>
            <person name="Fukushima T."/>
            <person name="Furuno M."/>
            <person name="Futaki S."/>
            <person name="Gariboldi M."/>
            <person name="Georgii-Hemming P."/>
            <person name="Gingeras T.R."/>
            <person name="Gojobori T."/>
            <person name="Green R.E."/>
            <person name="Gustincich S."/>
            <person name="Harbers M."/>
            <person name="Hayashi Y."/>
            <person name="Hensch T.K."/>
            <person name="Hirokawa N."/>
            <person name="Hill D."/>
            <person name="Huminiecki L."/>
            <person name="Iacono M."/>
            <person name="Ikeo K."/>
            <person name="Iwama A."/>
            <person name="Ishikawa T."/>
            <person name="Jakt M."/>
            <person name="Kanapin A."/>
            <person name="Katoh M."/>
            <person name="Kawasawa Y."/>
            <person name="Kelso J."/>
            <person name="Kitamura H."/>
            <person name="Kitano H."/>
            <person name="Kollias G."/>
            <person name="Krishnan S.P."/>
            <person name="Kruger A."/>
            <person name="Kummerfeld S.K."/>
            <person name="Kurochkin I.V."/>
            <person name="Lareau L.F."/>
            <person name="Lazarevic D."/>
            <person name="Lipovich L."/>
            <person name="Liu J."/>
            <person name="Liuni S."/>
            <person name="McWilliam S."/>
            <person name="Madan Babu M."/>
            <person name="Madera M."/>
            <person name="Marchionni L."/>
            <person name="Matsuda H."/>
            <person name="Matsuzawa S."/>
            <person name="Miki H."/>
            <person name="Mignone F."/>
            <person name="Miyake S."/>
            <person name="Morris K."/>
            <person name="Mottagui-Tabar S."/>
            <person name="Mulder N."/>
            <person name="Nakano N."/>
            <person name="Nakauchi H."/>
            <person name="Ng P."/>
            <person name="Nilsson R."/>
            <person name="Nishiguchi S."/>
            <person name="Nishikawa S."/>
            <person name="Nori F."/>
            <person name="Ohara O."/>
            <person name="Okazaki Y."/>
            <person name="Orlando V."/>
            <person name="Pang K.C."/>
            <person name="Pavan W.J."/>
            <person name="Pavesi G."/>
            <person name="Pesole G."/>
            <person name="Petrovsky N."/>
            <person name="Piazza S."/>
            <person name="Reed J."/>
            <person name="Reid J.F."/>
            <person name="Ring B.Z."/>
            <person name="Ringwald M."/>
            <person name="Rost B."/>
            <person name="Ruan Y."/>
            <person name="Salzberg S.L."/>
            <person name="Sandelin A."/>
            <person name="Schneider C."/>
            <person name="Schoenbach C."/>
            <person name="Sekiguchi K."/>
            <person name="Semple C.A."/>
            <person name="Seno S."/>
            <person name="Sessa L."/>
            <person name="Sheng Y."/>
            <person name="Shibata Y."/>
            <person name="Shimada H."/>
            <person name="Shimada K."/>
            <person name="Silva D."/>
            <person name="Sinclair B."/>
            <person name="Sperling S."/>
            <person name="Stupka E."/>
            <person name="Sugiura K."/>
            <person name="Sultana R."/>
            <person name="Takenaka Y."/>
            <person name="Taki K."/>
            <person name="Tammoja K."/>
            <person name="Tan S.L."/>
            <person name="Tang S."/>
            <person name="Taylor M.S."/>
            <person name="Tegner J."/>
            <person name="Teichmann S.A."/>
            <person name="Ueda H.R."/>
            <person name="van Nimwegen E."/>
            <person name="Verardo R."/>
            <person name="Wei C.L."/>
            <person name="Yagi K."/>
            <person name="Yamanishi H."/>
            <person name="Zabarovsky E."/>
            <person name="Zhu S."/>
            <person name="Zimmer A."/>
            <person name="Hide W."/>
            <person name="Bult C."/>
            <person name="Grimmond S.M."/>
            <person name="Teasdale R.D."/>
            <person name="Liu E.T."/>
            <person name="Brusic V."/>
            <person name="Quackenbush J."/>
            <person name="Wahlestedt C."/>
            <person name="Mattick J.S."/>
            <person name="Hume D.A."/>
            <person name="Kai C."/>
            <person name="Sasaki D."/>
            <person name="Tomaru Y."/>
            <person name="Fukuda S."/>
            <person name="Kanamori-Katayama M."/>
            <person name="Suzuki M."/>
            <person name="Aoki J."/>
            <person name="Arakawa T."/>
            <person name="Iida J."/>
            <person name="Imamura K."/>
            <person name="Itoh M."/>
            <person name="Kato T."/>
            <person name="Kawaji H."/>
            <person name="Kawagashira N."/>
            <person name="Kawashima T."/>
            <person name="Kojima M."/>
            <person name="Kondo S."/>
            <person name="Konno H."/>
            <person name="Nakano K."/>
            <person name="Ninomiya N."/>
            <person name="Nishio T."/>
            <person name="Okada M."/>
            <person name="Plessy C."/>
            <person name="Shibata K."/>
            <person name="Shiraki T."/>
            <person name="Suzuki S."/>
            <person name="Tagami M."/>
            <person name="Waki K."/>
            <person name="Watahiki A."/>
            <person name="Okamura-Oho Y."/>
            <person name="Suzuki H."/>
            <person name="Kawai J."/>
            <person name="Hayashizaki Y."/>
        </authorList>
    </citation>
    <scope>NUCLEOTIDE SEQUENCE [LARGE SCALE MRNA] OF 1481-1604</scope>
    <source>
        <strain>C57BL/6J</strain>
        <tissue>Corpus striatum</tissue>
        <tissue>Olfactory bulb</tissue>
    </source>
</reference>
<proteinExistence type="evidence at transcript level"/>